<keyword id="KW-0539">Nucleus</keyword>
<keyword id="KW-1185">Reference proteome</keyword>
<keyword id="KW-0677">Repeat</keyword>
<keyword id="KW-0698">rRNA processing</keyword>
<name>UTP6_DICDI</name>
<reference key="1">
    <citation type="journal article" date="2005" name="Nature">
        <title>The genome of the social amoeba Dictyostelium discoideum.</title>
        <authorList>
            <person name="Eichinger L."/>
            <person name="Pachebat J.A."/>
            <person name="Gloeckner G."/>
            <person name="Rajandream M.A."/>
            <person name="Sucgang R."/>
            <person name="Berriman M."/>
            <person name="Song J."/>
            <person name="Olsen R."/>
            <person name="Szafranski K."/>
            <person name="Xu Q."/>
            <person name="Tunggal B."/>
            <person name="Kummerfeld S."/>
            <person name="Madera M."/>
            <person name="Konfortov B.A."/>
            <person name="Rivero F."/>
            <person name="Bankier A.T."/>
            <person name="Lehmann R."/>
            <person name="Hamlin N."/>
            <person name="Davies R."/>
            <person name="Gaudet P."/>
            <person name="Fey P."/>
            <person name="Pilcher K."/>
            <person name="Chen G."/>
            <person name="Saunders D."/>
            <person name="Sodergren E.J."/>
            <person name="Davis P."/>
            <person name="Kerhornou A."/>
            <person name="Nie X."/>
            <person name="Hall N."/>
            <person name="Anjard C."/>
            <person name="Hemphill L."/>
            <person name="Bason N."/>
            <person name="Farbrother P."/>
            <person name="Desany B."/>
            <person name="Just E."/>
            <person name="Morio T."/>
            <person name="Rost R."/>
            <person name="Churcher C.M."/>
            <person name="Cooper J."/>
            <person name="Haydock S."/>
            <person name="van Driessche N."/>
            <person name="Cronin A."/>
            <person name="Goodhead I."/>
            <person name="Muzny D.M."/>
            <person name="Mourier T."/>
            <person name="Pain A."/>
            <person name="Lu M."/>
            <person name="Harper D."/>
            <person name="Lindsay R."/>
            <person name="Hauser H."/>
            <person name="James K.D."/>
            <person name="Quiles M."/>
            <person name="Madan Babu M."/>
            <person name="Saito T."/>
            <person name="Buchrieser C."/>
            <person name="Wardroper A."/>
            <person name="Felder M."/>
            <person name="Thangavelu M."/>
            <person name="Johnson D."/>
            <person name="Knights A."/>
            <person name="Loulseged H."/>
            <person name="Mungall K.L."/>
            <person name="Oliver K."/>
            <person name="Price C."/>
            <person name="Quail M.A."/>
            <person name="Urushihara H."/>
            <person name="Hernandez J."/>
            <person name="Rabbinowitsch E."/>
            <person name="Steffen D."/>
            <person name="Sanders M."/>
            <person name="Ma J."/>
            <person name="Kohara Y."/>
            <person name="Sharp S."/>
            <person name="Simmonds M.N."/>
            <person name="Spiegler S."/>
            <person name="Tivey A."/>
            <person name="Sugano S."/>
            <person name="White B."/>
            <person name="Walker D."/>
            <person name="Woodward J.R."/>
            <person name="Winckler T."/>
            <person name="Tanaka Y."/>
            <person name="Shaulsky G."/>
            <person name="Schleicher M."/>
            <person name="Weinstock G.M."/>
            <person name="Rosenthal A."/>
            <person name="Cox E.C."/>
            <person name="Chisholm R.L."/>
            <person name="Gibbs R.A."/>
            <person name="Loomis W.F."/>
            <person name="Platzer M."/>
            <person name="Kay R.R."/>
            <person name="Williams J.G."/>
            <person name="Dear P.H."/>
            <person name="Noegel A.A."/>
            <person name="Barrell B.G."/>
            <person name="Kuspa A."/>
        </authorList>
    </citation>
    <scope>NUCLEOTIDE SEQUENCE [LARGE SCALE GENOMIC DNA]</scope>
    <source>
        <strain>AX4</strain>
    </source>
</reference>
<reference key="2">
    <citation type="journal article" date="2006" name="J. Proteome Res.">
        <title>Identification of novel centrosomal proteins in Dictyostelium discoideum by comparative proteomic approaches.</title>
        <authorList>
            <person name="Reinders Y."/>
            <person name="Schulz I."/>
            <person name="Graef R."/>
            <person name="Sickmann A."/>
        </authorList>
    </citation>
    <scope>IDENTIFICATION BY MASS SPECTROMETRY [LARGE SCALE ANALYSIS]</scope>
</reference>
<accession>Q54WN5</accession>
<evidence type="ECO:0000250" key="1"/>
<evidence type="ECO:0000305" key="2"/>
<protein>
    <recommendedName>
        <fullName>U3 small nucleolar RNA-associated protein 6 homolog</fullName>
    </recommendedName>
</protein>
<feature type="chain" id="PRO_0000327717" description="U3 small nucleolar RNA-associated protein 6 homolog">
    <location>
        <begin position="1"/>
        <end position="609"/>
    </location>
</feature>
<feature type="repeat" description="HAT 1">
    <location>
        <begin position="84"/>
        <end position="116"/>
    </location>
</feature>
<feature type="repeat" description="HAT 2">
    <location>
        <begin position="118"/>
        <end position="150"/>
    </location>
</feature>
<feature type="repeat" description="HAT 3">
    <location>
        <begin position="511"/>
        <end position="540"/>
    </location>
</feature>
<feature type="repeat" description="HAT 4">
    <location>
        <begin position="544"/>
        <end position="579"/>
    </location>
</feature>
<sequence>MDRVNFSIDQLLEETSKLVSLGIISKQECKDIMKKREYHEIKIFNRNSHKSDFLTYIKYELELDRLFHKRGKAKNIEFDYRLRSALRHAIILFGSATKKFPKDEALWINALNIRMKRASKEGTGRLFSIALSNLPRSAKLWKLAATFEFEVNKNIQNARNLIQAGIQFNKTDKSLWHYFFLMELTYISLLFSDITFIDKKIEEEEEEAIKLNLDSLRKSEKIEKDEFITFGKEILSADKLKQSSLIRGQIAQIVFRKAIKSSIGQDFDFRKHFYKIASKFLDIGKDSENPMGAGELLQKEILESLVTDFPNDDKTYIFLASIEQSKSSEPSLLKRLNNSTKILNQGLTIIKSESYLFNYIHFIRQIIVDIKLKENKLIENITDILLKAYKYSIDNNILKESGYQYYIELLLELGKTNDAIKVSEESVKLFKNSNQLWNQRINLLIKNEMVVKLFDNLSNNNEYNNIDKCFEMAVKNCTSSTTSTTSSTSTSSSSNLFIEYFKYQVVFKFDKDYKKIVDLFEKLLKQLDEFYQKCILYEEERIEKNINDIRSLYEKCLSIKEISSKDVDVWLNYRNFELKSAGDIERANTIATRGKKSLADPLPLLSQLQ</sequence>
<gene>
    <name type="primary">utp6</name>
    <name type="ORF">DDB_G0279601</name>
</gene>
<comment type="function">
    <text evidence="1">Involved in nucleolar processing of pre-18S ribosomal RNA.</text>
</comment>
<comment type="subcellular location">
    <subcellularLocation>
        <location evidence="1">Nucleus</location>
        <location evidence="1">Nucleolus</location>
    </subcellularLocation>
</comment>
<comment type="similarity">
    <text evidence="2">Belongs to the UTP6 family.</text>
</comment>
<proteinExistence type="evidence at protein level"/>
<organism>
    <name type="scientific">Dictyostelium discoideum</name>
    <name type="common">Social amoeba</name>
    <dbReference type="NCBI Taxonomy" id="44689"/>
    <lineage>
        <taxon>Eukaryota</taxon>
        <taxon>Amoebozoa</taxon>
        <taxon>Evosea</taxon>
        <taxon>Eumycetozoa</taxon>
        <taxon>Dictyostelia</taxon>
        <taxon>Dictyosteliales</taxon>
        <taxon>Dictyosteliaceae</taxon>
        <taxon>Dictyostelium</taxon>
    </lineage>
</organism>
<dbReference type="EMBL" id="AAFI02000031">
    <property type="protein sequence ID" value="EAL67739.1"/>
    <property type="molecule type" value="Genomic_DNA"/>
</dbReference>
<dbReference type="RefSeq" id="XP_641682.1">
    <property type="nucleotide sequence ID" value="XM_636590.1"/>
</dbReference>
<dbReference type="SMR" id="Q54WN5"/>
<dbReference type="FunCoup" id="Q54WN5">
    <property type="interactions" value="501"/>
</dbReference>
<dbReference type="IntAct" id="Q54WN5">
    <property type="interactions" value="1"/>
</dbReference>
<dbReference type="STRING" id="44689.Q54WN5"/>
<dbReference type="PaxDb" id="44689-DDB0233969"/>
<dbReference type="EnsemblProtists" id="EAL67739">
    <property type="protein sequence ID" value="EAL67739"/>
    <property type="gene ID" value="DDB_G0279601"/>
</dbReference>
<dbReference type="GeneID" id="8622090"/>
<dbReference type="KEGG" id="ddi:DDB_G0279601"/>
<dbReference type="dictyBase" id="DDB_G0279601">
    <property type="gene designation" value="utp6"/>
</dbReference>
<dbReference type="VEuPathDB" id="AmoebaDB:DDB_G0279601"/>
<dbReference type="eggNOG" id="KOG2396">
    <property type="taxonomic scope" value="Eukaryota"/>
</dbReference>
<dbReference type="HOGENOM" id="CLU_479153_0_0_1"/>
<dbReference type="InParanoid" id="Q54WN5"/>
<dbReference type="OMA" id="CKQWNAK"/>
<dbReference type="PhylomeDB" id="Q54WN5"/>
<dbReference type="Reactome" id="R-DDI-6791226">
    <property type="pathway name" value="Major pathway of rRNA processing in the nucleolus and cytosol"/>
</dbReference>
<dbReference type="PRO" id="PR:Q54WN5"/>
<dbReference type="Proteomes" id="UP000002195">
    <property type="component" value="Chromosome 3"/>
</dbReference>
<dbReference type="GO" id="GO:0034388">
    <property type="term" value="C:Pwp2p-containing subcomplex of 90S preribosome"/>
    <property type="evidence" value="ECO:0000318"/>
    <property type="project" value="GO_Central"/>
</dbReference>
<dbReference type="GO" id="GO:0032040">
    <property type="term" value="C:small-subunit processome"/>
    <property type="evidence" value="ECO:0000318"/>
    <property type="project" value="GO_Central"/>
</dbReference>
<dbReference type="GO" id="GO:0030515">
    <property type="term" value="F:snoRNA binding"/>
    <property type="evidence" value="ECO:0000250"/>
    <property type="project" value="dictyBase"/>
</dbReference>
<dbReference type="GO" id="GO:0030490">
    <property type="term" value="P:maturation of SSU-rRNA"/>
    <property type="evidence" value="ECO:0000250"/>
    <property type="project" value="dictyBase"/>
</dbReference>
<dbReference type="GO" id="GO:0000462">
    <property type="term" value="P:maturation of SSU-rRNA from tricistronic rRNA transcript (SSU-rRNA, 5.8S rRNA, LSU-rRNA)"/>
    <property type="evidence" value="ECO:0000318"/>
    <property type="project" value="GO_Central"/>
</dbReference>
<dbReference type="FunFam" id="1.25.40.10:FF:003718">
    <property type="entry name" value="U3 small nucleolar RNA-associated protein 6 homolog"/>
    <property type="match status" value="1"/>
</dbReference>
<dbReference type="Gene3D" id="1.25.40.10">
    <property type="entry name" value="Tetratricopeptide repeat domain"/>
    <property type="match status" value="2"/>
</dbReference>
<dbReference type="InterPro" id="IPR003107">
    <property type="entry name" value="HAT"/>
</dbReference>
<dbReference type="InterPro" id="IPR011990">
    <property type="entry name" value="TPR-like_helical_dom_sf"/>
</dbReference>
<dbReference type="InterPro" id="IPR013949">
    <property type="entry name" value="Utp6"/>
</dbReference>
<dbReference type="InterPro" id="IPR056907">
    <property type="entry name" value="UTP6_C"/>
</dbReference>
<dbReference type="InterPro" id="IPR055347">
    <property type="entry name" value="UTP6_N"/>
</dbReference>
<dbReference type="PANTHER" id="PTHR23271">
    <property type="entry name" value="HEPATOCELLULAR CARCINOMA-ASSOCIATED ANTIGEN 66"/>
    <property type="match status" value="1"/>
</dbReference>
<dbReference type="PANTHER" id="PTHR23271:SF1">
    <property type="entry name" value="U3 SMALL NUCLEOLAR RNA-ASSOCIATED PROTEIN 6 HOMOLOG"/>
    <property type="match status" value="1"/>
</dbReference>
<dbReference type="Pfam" id="PF08640">
    <property type="entry name" value="U3_assoc_6"/>
    <property type="match status" value="1"/>
</dbReference>
<dbReference type="Pfam" id="PF24892">
    <property type="entry name" value="UTP6_C"/>
    <property type="match status" value="1"/>
</dbReference>
<dbReference type="SMART" id="SM00386">
    <property type="entry name" value="HAT"/>
    <property type="match status" value="4"/>
</dbReference>
<dbReference type="SUPFAM" id="SSF48452">
    <property type="entry name" value="TPR-like"/>
    <property type="match status" value="2"/>
</dbReference>